<sequence>MRSAQVYRWQIPMDAGVVLRDRRLKTRDGLYVCLREGEREGWGEISPLPGFSQETWEEAQSVLLAWVNNWLAGDCELPQMPSVAFGVSCALAELADTLPQAANYRAAPLCNGDPDDLILKLADMPGEKVAKVKVGLYEAVRDGMVVNLLLEAIPDLHLRLDANRAWTPLKGQQFAKYVNPDYRHRIAFLEEPCKTRDDSRAFARETGIAIAWDESLREPDFAFVAEEGVRAVVIKPTLTGSLDKVREQVQAAHALGLTAVISSSIESSLGLTQLARIAAWLTPDTIPGLDTLDLMQAQQVRRWPGSLLPLVDVDALEQLL</sequence>
<dbReference type="EC" id="4.2.1.113" evidence="1"/>
<dbReference type="EMBL" id="AE014075">
    <property type="protein sequence ID" value="AAN81258.1"/>
    <property type="molecule type" value="Genomic_DNA"/>
</dbReference>
<dbReference type="RefSeq" id="WP_001255606.1">
    <property type="nucleotide sequence ID" value="NZ_CP051263.1"/>
</dbReference>
<dbReference type="SMR" id="Q8FFL4"/>
<dbReference type="STRING" id="199310.c2804"/>
<dbReference type="KEGG" id="ecc:c2804"/>
<dbReference type="eggNOG" id="COG1441">
    <property type="taxonomic scope" value="Bacteria"/>
</dbReference>
<dbReference type="HOGENOM" id="CLU_030273_0_1_6"/>
<dbReference type="BioCyc" id="ECOL199310:C2804-MONOMER"/>
<dbReference type="UniPathway" id="UPA00079"/>
<dbReference type="UniPathway" id="UPA01057">
    <property type="reaction ID" value="UER00165"/>
</dbReference>
<dbReference type="Proteomes" id="UP000001410">
    <property type="component" value="Chromosome"/>
</dbReference>
<dbReference type="GO" id="GO:0000287">
    <property type="term" value="F:magnesium ion binding"/>
    <property type="evidence" value="ECO:0007669"/>
    <property type="project" value="UniProtKB-UniRule"/>
</dbReference>
<dbReference type="GO" id="GO:0043748">
    <property type="term" value="F:O-succinylbenzoate synthase activity"/>
    <property type="evidence" value="ECO:0007669"/>
    <property type="project" value="UniProtKB-EC"/>
</dbReference>
<dbReference type="GO" id="GO:0009234">
    <property type="term" value="P:menaquinone biosynthetic process"/>
    <property type="evidence" value="ECO:0007669"/>
    <property type="project" value="UniProtKB-UniRule"/>
</dbReference>
<dbReference type="CDD" id="cd03320">
    <property type="entry name" value="OSBS"/>
    <property type="match status" value="1"/>
</dbReference>
<dbReference type="FunFam" id="3.20.20.120:FF:000006">
    <property type="entry name" value="o-succinylbenzoate synthase"/>
    <property type="match status" value="1"/>
</dbReference>
<dbReference type="FunFam" id="3.30.390.10:FF:000005">
    <property type="entry name" value="o-succinylbenzoate synthase"/>
    <property type="match status" value="1"/>
</dbReference>
<dbReference type="Gene3D" id="3.20.20.120">
    <property type="entry name" value="Enolase-like C-terminal domain"/>
    <property type="match status" value="1"/>
</dbReference>
<dbReference type="Gene3D" id="3.30.390.10">
    <property type="entry name" value="Enolase-like, N-terminal domain"/>
    <property type="match status" value="1"/>
</dbReference>
<dbReference type="HAMAP" id="MF_00470">
    <property type="entry name" value="MenC_1"/>
    <property type="match status" value="1"/>
</dbReference>
<dbReference type="InterPro" id="IPR036849">
    <property type="entry name" value="Enolase-like_C_sf"/>
</dbReference>
<dbReference type="InterPro" id="IPR029017">
    <property type="entry name" value="Enolase-like_N"/>
</dbReference>
<dbReference type="InterPro" id="IPR029065">
    <property type="entry name" value="Enolase_C-like"/>
</dbReference>
<dbReference type="InterPro" id="IPR013342">
    <property type="entry name" value="Mandelate_racemase_C"/>
</dbReference>
<dbReference type="InterPro" id="IPR010196">
    <property type="entry name" value="OSB_synthase_MenC1"/>
</dbReference>
<dbReference type="InterPro" id="IPR041338">
    <property type="entry name" value="OSBS_N"/>
</dbReference>
<dbReference type="NCBIfam" id="TIGR01927">
    <property type="entry name" value="menC_gam_Gplu"/>
    <property type="match status" value="1"/>
</dbReference>
<dbReference type="NCBIfam" id="NF003473">
    <property type="entry name" value="PRK05105.1"/>
    <property type="match status" value="1"/>
</dbReference>
<dbReference type="PANTHER" id="PTHR48073:SF2">
    <property type="entry name" value="O-SUCCINYLBENZOATE SYNTHASE"/>
    <property type="match status" value="1"/>
</dbReference>
<dbReference type="PANTHER" id="PTHR48073">
    <property type="entry name" value="O-SUCCINYLBENZOATE SYNTHASE-RELATED"/>
    <property type="match status" value="1"/>
</dbReference>
<dbReference type="Pfam" id="PF21508">
    <property type="entry name" value="MenC_N"/>
    <property type="match status" value="1"/>
</dbReference>
<dbReference type="Pfam" id="PF13378">
    <property type="entry name" value="MR_MLE_C"/>
    <property type="match status" value="1"/>
</dbReference>
<dbReference type="SFLD" id="SFLDG00180">
    <property type="entry name" value="muconate_cycloisomerase"/>
    <property type="match status" value="1"/>
</dbReference>
<dbReference type="SFLD" id="SFLDF00009">
    <property type="entry name" value="o-succinylbenzoate_synthase"/>
    <property type="match status" value="1"/>
</dbReference>
<dbReference type="SMART" id="SM00922">
    <property type="entry name" value="MR_MLE"/>
    <property type="match status" value="1"/>
</dbReference>
<dbReference type="SUPFAM" id="SSF51604">
    <property type="entry name" value="Enolase C-terminal domain-like"/>
    <property type="match status" value="1"/>
</dbReference>
<dbReference type="SUPFAM" id="SSF54826">
    <property type="entry name" value="Enolase N-terminal domain-like"/>
    <property type="match status" value="1"/>
</dbReference>
<feature type="chain" id="PRO_1000013800" description="o-succinylbenzoate synthase">
    <location>
        <begin position="1"/>
        <end position="320"/>
    </location>
</feature>
<feature type="active site" description="Proton donor" evidence="1">
    <location>
        <position position="133"/>
    </location>
</feature>
<feature type="active site" description="Proton acceptor" evidence="1">
    <location>
        <position position="235"/>
    </location>
</feature>
<feature type="binding site" evidence="1">
    <location>
        <position position="161"/>
    </location>
    <ligand>
        <name>Mg(2+)</name>
        <dbReference type="ChEBI" id="CHEBI:18420"/>
    </ligand>
</feature>
<feature type="binding site" evidence="1">
    <location>
        <position position="190"/>
    </location>
    <ligand>
        <name>Mg(2+)</name>
        <dbReference type="ChEBI" id="CHEBI:18420"/>
    </ligand>
</feature>
<feature type="binding site" evidence="1">
    <location>
        <position position="213"/>
    </location>
    <ligand>
        <name>Mg(2+)</name>
        <dbReference type="ChEBI" id="CHEBI:18420"/>
    </ligand>
</feature>
<gene>
    <name evidence="1" type="primary">menC</name>
    <name type="ordered locus">c2804</name>
</gene>
<proteinExistence type="inferred from homology"/>
<protein>
    <recommendedName>
        <fullName evidence="1">o-succinylbenzoate synthase</fullName>
        <shortName evidence="1">OSB synthase</shortName>
        <shortName evidence="1">OSBS</shortName>
        <ecNumber evidence="1">4.2.1.113</ecNumber>
    </recommendedName>
    <alternativeName>
        <fullName evidence="1">4-(2'-carboxyphenyl)-4-oxybutyric acid synthase</fullName>
    </alternativeName>
    <alternativeName>
        <fullName evidence="1">o-succinylbenzoic acid synthase</fullName>
    </alternativeName>
</protein>
<accession>Q8FFL4</accession>
<organism>
    <name type="scientific">Escherichia coli O6:H1 (strain CFT073 / ATCC 700928 / UPEC)</name>
    <dbReference type="NCBI Taxonomy" id="199310"/>
    <lineage>
        <taxon>Bacteria</taxon>
        <taxon>Pseudomonadati</taxon>
        <taxon>Pseudomonadota</taxon>
        <taxon>Gammaproteobacteria</taxon>
        <taxon>Enterobacterales</taxon>
        <taxon>Enterobacteriaceae</taxon>
        <taxon>Escherichia</taxon>
    </lineage>
</organism>
<name>MENC_ECOL6</name>
<evidence type="ECO:0000255" key="1">
    <source>
        <dbReference type="HAMAP-Rule" id="MF_00470"/>
    </source>
</evidence>
<keyword id="KW-0456">Lyase</keyword>
<keyword id="KW-0460">Magnesium</keyword>
<keyword id="KW-0474">Menaquinone biosynthesis</keyword>
<keyword id="KW-0479">Metal-binding</keyword>
<keyword id="KW-1185">Reference proteome</keyword>
<comment type="function">
    <text evidence="1">Converts 2-succinyl-6-hydroxy-2,4-cyclohexadiene-1-carboxylate (SHCHC) to 2-succinylbenzoate (OSB).</text>
</comment>
<comment type="catalytic activity">
    <reaction evidence="1">
        <text>(1R,6R)-6-hydroxy-2-succinyl-cyclohexa-2,4-diene-1-carboxylate = 2-succinylbenzoate + H2O</text>
        <dbReference type="Rhea" id="RHEA:10196"/>
        <dbReference type="ChEBI" id="CHEBI:15377"/>
        <dbReference type="ChEBI" id="CHEBI:18325"/>
        <dbReference type="ChEBI" id="CHEBI:58689"/>
        <dbReference type="EC" id="4.2.1.113"/>
    </reaction>
</comment>
<comment type="cofactor">
    <cofactor evidence="1">
        <name>a divalent metal cation</name>
        <dbReference type="ChEBI" id="CHEBI:60240"/>
    </cofactor>
</comment>
<comment type="pathway">
    <text evidence="1">Quinol/quinone metabolism; 1,4-dihydroxy-2-naphthoate biosynthesis; 1,4-dihydroxy-2-naphthoate from chorismate: step 4/7.</text>
</comment>
<comment type="pathway">
    <text evidence="1">Quinol/quinone metabolism; menaquinone biosynthesis.</text>
</comment>
<comment type="similarity">
    <text evidence="1">Belongs to the mandelate racemase/muconate lactonizing enzyme family. MenC type 1 subfamily.</text>
</comment>
<reference key="1">
    <citation type="journal article" date="2002" name="Proc. Natl. Acad. Sci. U.S.A.">
        <title>Extensive mosaic structure revealed by the complete genome sequence of uropathogenic Escherichia coli.</title>
        <authorList>
            <person name="Welch R.A."/>
            <person name="Burland V."/>
            <person name="Plunkett G. III"/>
            <person name="Redford P."/>
            <person name="Roesch P."/>
            <person name="Rasko D."/>
            <person name="Buckles E.L."/>
            <person name="Liou S.-R."/>
            <person name="Boutin A."/>
            <person name="Hackett J."/>
            <person name="Stroud D."/>
            <person name="Mayhew G.F."/>
            <person name="Rose D.J."/>
            <person name="Zhou S."/>
            <person name="Schwartz D.C."/>
            <person name="Perna N.T."/>
            <person name="Mobley H.L.T."/>
            <person name="Donnenberg M.S."/>
            <person name="Blattner F.R."/>
        </authorList>
    </citation>
    <scope>NUCLEOTIDE SEQUENCE [LARGE SCALE GENOMIC DNA]</scope>
    <source>
        <strain>CFT073 / ATCC 700928 / UPEC</strain>
    </source>
</reference>